<comment type="catalytic activity">
    <reaction evidence="1">
        <text>diphosphate + H2O = 2 phosphate + H(+)</text>
        <dbReference type="Rhea" id="RHEA:24576"/>
        <dbReference type="ChEBI" id="CHEBI:15377"/>
        <dbReference type="ChEBI" id="CHEBI:15378"/>
        <dbReference type="ChEBI" id="CHEBI:33019"/>
        <dbReference type="ChEBI" id="CHEBI:43474"/>
        <dbReference type="EC" id="3.6.1.1"/>
    </reaction>
</comment>
<comment type="cofactor">
    <cofactor evidence="1">
        <name>Mn(2+)</name>
        <dbReference type="ChEBI" id="CHEBI:29035"/>
    </cofactor>
    <text evidence="1">Binds 2 manganese ions per subunit.</text>
</comment>
<comment type="subcellular location">
    <subcellularLocation>
        <location evidence="1">Cytoplasm</location>
    </subcellularLocation>
</comment>
<comment type="similarity">
    <text evidence="1">Belongs to the PPase class C family.</text>
</comment>
<comment type="sequence caution" evidence="2">
    <conflict type="erroneous initiation">
        <sequence resource="EMBL-CDS" id="CAG40997"/>
    </conflict>
</comment>
<sequence length="309" mass="34069">MAKTYIFGHKNPDTDAISSAIIMAEFEQLRGNSGAKAYRLGDVSAETQFALDTFNVPAPELLTDDLDGQDVILVDHNEFQQSSDTIASATIKHVIDHHRIANFETAGPLCYRAEPVGCTATILYKMFRERGFEIKPEIAGLMLSAIISDSLLFKSPTCTQQDVKAAEELKDIAKVDIQKYGLDMLKAGASTTDKSVEFLLNMDAKSFTMGDYVTRIAQVNAVDLDEVLNRKEDLEKEMLAVSAQEKYDLFVLVVTDIINSDSKILVVGAEKDKVGEAFNVQLEDDMAFLSGVVSRKKQIVPQITEALTK</sequence>
<reference key="1">
    <citation type="journal article" date="2004" name="Proc. Natl. Acad. Sci. U.S.A.">
        <title>Complete genomes of two clinical Staphylococcus aureus strains: evidence for the rapid evolution of virulence and drug resistance.</title>
        <authorList>
            <person name="Holden M.T.G."/>
            <person name="Feil E.J."/>
            <person name="Lindsay J.A."/>
            <person name="Peacock S.J."/>
            <person name="Day N.P.J."/>
            <person name="Enright M.C."/>
            <person name="Foster T.J."/>
            <person name="Moore C.E."/>
            <person name="Hurst L."/>
            <person name="Atkin R."/>
            <person name="Barron A."/>
            <person name="Bason N."/>
            <person name="Bentley S.D."/>
            <person name="Chillingworth C."/>
            <person name="Chillingworth T."/>
            <person name="Churcher C."/>
            <person name="Clark L."/>
            <person name="Corton C."/>
            <person name="Cronin A."/>
            <person name="Doggett J."/>
            <person name="Dowd L."/>
            <person name="Feltwell T."/>
            <person name="Hance Z."/>
            <person name="Harris B."/>
            <person name="Hauser H."/>
            <person name="Holroyd S."/>
            <person name="Jagels K."/>
            <person name="James K.D."/>
            <person name="Lennard N."/>
            <person name="Line A."/>
            <person name="Mayes R."/>
            <person name="Moule S."/>
            <person name="Mungall K."/>
            <person name="Ormond D."/>
            <person name="Quail M.A."/>
            <person name="Rabbinowitsch E."/>
            <person name="Rutherford K.M."/>
            <person name="Sanders M."/>
            <person name="Sharp S."/>
            <person name="Simmonds M."/>
            <person name="Stevens K."/>
            <person name="Whitehead S."/>
            <person name="Barrell B.G."/>
            <person name="Spratt B.G."/>
            <person name="Parkhill J."/>
        </authorList>
    </citation>
    <scope>NUCLEOTIDE SEQUENCE [LARGE SCALE GENOMIC DNA]</scope>
    <source>
        <strain>MRSA252</strain>
    </source>
</reference>
<dbReference type="EC" id="3.6.1.1" evidence="1"/>
<dbReference type="EMBL" id="BX571856">
    <property type="protein sequence ID" value="CAG40997.1"/>
    <property type="status" value="ALT_INIT"/>
    <property type="molecule type" value="Genomic_DNA"/>
</dbReference>
<dbReference type="RefSeq" id="WP_001140871.1">
    <property type="nucleotide sequence ID" value="NC_002952.2"/>
</dbReference>
<dbReference type="SMR" id="Q6GFD7"/>
<dbReference type="BindingDB" id="Q6GFD7"/>
<dbReference type="KEGG" id="sar:SAR2012"/>
<dbReference type="HOGENOM" id="CLU_025243_0_1_9"/>
<dbReference type="Proteomes" id="UP000000596">
    <property type="component" value="Chromosome"/>
</dbReference>
<dbReference type="GO" id="GO:0005737">
    <property type="term" value="C:cytoplasm"/>
    <property type="evidence" value="ECO:0007669"/>
    <property type="project" value="UniProtKB-SubCell"/>
</dbReference>
<dbReference type="GO" id="GO:0004427">
    <property type="term" value="F:inorganic diphosphate phosphatase activity"/>
    <property type="evidence" value="ECO:0007669"/>
    <property type="project" value="UniProtKB-UniRule"/>
</dbReference>
<dbReference type="GO" id="GO:0030145">
    <property type="term" value="F:manganese ion binding"/>
    <property type="evidence" value="ECO:0007669"/>
    <property type="project" value="UniProtKB-UniRule"/>
</dbReference>
<dbReference type="FunFam" id="3.10.310.20:FF:000001">
    <property type="entry name" value="Probable manganese-dependent inorganic pyrophosphatase"/>
    <property type="match status" value="1"/>
</dbReference>
<dbReference type="FunFam" id="3.90.1640.10:FF:000001">
    <property type="entry name" value="Probable manganese-dependent inorganic pyrophosphatase"/>
    <property type="match status" value="1"/>
</dbReference>
<dbReference type="Gene3D" id="3.10.310.20">
    <property type="entry name" value="DHHA2 domain"/>
    <property type="match status" value="1"/>
</dbReference>
<dbReference type="Gene3D" id="3.90.1640.10">
    <property type="entry name" value="inorganic pyrophosphatase (n-terminal core)"/>
    <property type="match status" value="1"/>
</dbReference>
<dbReference type="HAMAP" id="MF_00207">
    <property type="entry name" value="PPase_C"/>
    <property type="match status" value="1"/>
</dbReference>
<dbReference type="InterPro" id="IPR001667">
    <property type="entry name" value="DDH_dom"/>
</dbReference>
<dbReference type="InterPro" id="IPR038763">
    <property type="entry name" value="DHH_sf"/>
</dbReference>
<dbReference type="InterPro" id="IPR004097">
    <property type="entry name" value="DHHA2"/>
</dbReference>
<dbReference type="InterPro" id="IPR038222">
    <property type="entry name" value="DHHA2_dom_sf"/>
</dbReference>
<dbReference type="InterPro" id="IPR022934">
    <property type="entry name" value="Mn-dep_inorganic_PyrPase"/>
</dbReference>
<dbReference type="NCBIfam" id="NF003877">
    <property type="entry name" value="PRK05427.1"/>
    <property type="match status" value="1"/>
</dbReference>
<dbReference type="PANTHER" id="PTHR12112">
    <property type="entry name" value="BNIP - RELATED"/>
    <property type="match status" value="1"/>
</dbReference>
<dbReference type="PANTHER" id="PTHR12112:SF22">
    <property type="entry name" value="MANGANESE-DEPENDENT INORGANIC PYROPHOSPHATASE-RELATED"/>
    <property type="match status" value="1"/>
</dbReference>
<dbReference type="Pfam" id="PF01368">
    <property type="entry name" value="DHH"/>
    <property type="match status" value="1"/>
</dbReference>
<dbReference type="Pfam" id="PF02833">
    <property type="entry name" value="DHHA2"/>
    <property type="match status" value="1"/>
</dbReference>
<dbReference type="SMART" id="SM01131">
    <property type="entry name" value="DHHA2"/>
    <property type="match status" value="1"/>
</dbReference>
<dbReference type="SUPFAM" id="SSF64182">
    <property type="entry name" value="DHH phosphoesterases"/>
    <property type="match status" value="1"/>
</dbReference>
<keyword id="KW-0963">Cytoplasm</keyword>
<keyword id="KW-0378">Hydrolase</keyword>
<keyword id="KW-0464">Manganese</keyword>
<keyword id="KW-0479">Metal-binding</keyword>
<protein>
    <recommendedName>
        <fullName evidence="1">Probable manganese-dependent inorganic pyrophosphatase</fullName>
        <ecNumber evidence="1">3.6.1.1</ecNumber>
    </recommendedName>
    <alternativeName>
        <fullName evidence="1">Pyrophosphate phospho-hydrolase</fullName>
        <shortName evidence="1">PPase</shortName>
    </alternativeName>
</protein>
<feature type="chain" id="PRO_0000158582" description="Probable manganese-dependent inorganic pyrophosphatase">
    <location>
        <begin position="1"/>
        <end position="309"/>
    </location>
</feature>
<feature type="binding site" evidence="1">
    <location>
        <position position="9"/>
    </location>
    <ligand>
        <name>Mn(2+)</name>
        <dbReference type="ChEBI" id="CHEBI:29035"/>
        <label>1</label>
    </ligand>
</feature>
<feature type="binding site" evidence="1">
    <location>
        <position position="13"/>
    </location>
    <ligand>
        <name>Mn(2+)</name>
        <dbReference type="ChEBI" id="CHEBI:29035"/>
        <label>1</label>
    </ligand>
</feature>
<feature type="binding site" evidence="1">
    <location>
        <position position="15"/>
    </location>
    <ligand>
        <name>Mn(2+)</name>
        <dbReference type="ChEBI" id="CHEBI:29035"/>
        <label>2</label>
    </ligand>
</feature>
<feature type="binding site" evidence="1">
    <location>
        <position position="75"/>
    </location>
    <ligand>
        <name>Mn(2+)</name>
        <dbReference type="ChEBI" id="CHEBI:29035"/>
        <label>1</label>
    </ligand>
</feature>
<feature type="binding site" evidence="1">
    <location>
        <position position="75"/>
    </location>
    <ligand>
        <name>Mn(2+)</name>
        <dbReference type="ChEBI" id="CHEBI:29035"/>
        <label>2</label>
    </ligand>
</feature>
<feature type="binding site" evidence="1">
    <location>
        <position position="97"/>
    </location>
    <ligand>
        <name>Mn(2+)</name>
        <dbReference type="ChEBI" id="CHEBI:29035"/>
        <label>2</label>
    </ligand>
</feature>
<feature type="binding site" evidence="1">
    <location>
        <position position="149"/>
    </location>
    <ligand>
        <name>Mn(2+)</name>
        <dbReference type="ChEBI" id="CHEBI:29035"/>
        <label>2</label>
    </ligand>
</feature>
<proteinExistence type="inferred from homology"/>
<evidence type="ECO:0000255" key="1">
    <source>
        <dbReference type="HAMAP-Rule" id="MF_00207"/>
    </source>
</evidence>
<evidence type="ECO:0000305" key="2"/>
<organism>
    <name type="scientific">Staphylococcus aureus (strain MRSA252)</name>
    <dbReference type="NCBI Taxonomy" id="282458"/>
    <lineage>
        <taxon>Bacteria</taxon>
        <taxon>Bacillati</taxon>
        <taxon>Bacillota</taxon>
        <taxon>Bacilli</taxon>
        <taxon>Bacillales</taxon>
        <taxon>Staphylococcaceae</taxon>
        <taxon>Staphylococcus</taxon>
    </lineage>
</organism>
<name>PPAC_STAAR</name>
<gene>
    <name evidence="1" type="primary">ppaC</name>
    <name type="ordered locus">SAR2012</name>
</gene>
<accession>Q6GFD7</accession>